<reference evidence="9 12" key="1">
    <citation type="journal article" date="2005" name="Science">
        <title>The transcriptional landscape of the mammalian genome.</title>
        <authorList>
            <person name="Carninci P."/>
            <person name="Kasukawa T."/>
            <person name="Katayama S."/>
            <person name="Gough J."/>
            <person name="Frith M.C."/>
            <person name="Maeda N."/>
            <person name="Oyama R."/>
            <person name="Ravasi T."/>
            <person name="Lenhard B."/>
            <person name="Wells C."/>
            <person name="Kodzius R."/>
            <person name="Shimokawa K."/>
            <person name="Bajic V.B."/>
            <person name="Brenner S.E."/>
            <person name="Batalov S."/>
            <person name="Forrest A.R."/>
            <person name="Zavolan M."/>
            <person name="Davis M.J."/>
            <person name="Wilming L.G."/>
            <person name="Aidinis V."/>
            <person name="Allen J.E."/>
            <person name="Ambesi-Impiombato A."/>
            <person name="Apweiler R."/>
            <person name="Aturaliya R.N."/>
            <person name="Bailey T.L."/>
            <person name="Bansal M."/>
            <person name="Baxter L."/>
            <person name="Beisel K.W."/>
            <person name="Bersano T."/>
            <person name="Bono H."/>
            <person name="Chalk A.M."/>
            <person name="Chiu K.P."/>
            <person name="Choudhary V."/>
            <person name="Christoffels A."/>
            <person name="Clutterbuck D.R."/>
            <person name="Crowe M.L."/>
            <person name="Dalla E."/>
            <person name="Dalrymple B.P."/>
            <person name="de Bono B."/>
            <person name="Della Gatta G."/>
            <person name="di Bernardo D."/>
            <person name="Down T."/>
            <person name="Engstrom P."/>
            <person name="Fagiolini M."/>
            <person name="Faulkner G."/>
            <person name="Fletcher C.F."/>
            <person name="Fukushima T."/>
            <person name="Furuno M."/>
            <person name="Futaki S."/>
            <person name="Gariboldi M."/>
            <person name="Georgii-Hemming P."/>
            <person name="Gingeras T.R."/>
            <person name="Gojobori T."/>
            <person name="Green R.E."/>
            <person name="Gustincich S."/>
            <person name="Harbers M."/>
            <person name="Hayashi Y."/>
            <person name="Hensch T.K."/>
            <person name="Hirokawa N."/>
            <person name="Hill D."/>
            <person name="Huminiecki L."/>
            <person name="Iacono M."/>
            <person name="Ikeo K."/>
            <person name="Iwama A."/>
            <person name="Ishikawa T."/>
            <person name="Jakt M."/>
            <person name="Kanapin A."/>
            <person name="Katoh M."/>
            <person name="Kawasawa Y."/>
            <person name="Kelso J."/>
            <person name="Kitamura H."/>
            <person name="Kitano H."/>
            <person name="Kollias G."/>
            <person name="Krishnan S.P."/>
            <person name="Kruger A."/>
            <person name="Kummerfeld S.K."/>
            <person name="Kurochkin I.V."/>
            <person name="Lareau L.F."/>
            <person name="Lazarevic D."/>
            <person name="Lipovich L."/>
            <person name="Liu J."/>
            <person name="Liuni S."/>
            <person name="McWilliam S."/>
            <person name="Madan Babu M."/>
            <person name="Madera M."/>
            <person name="Marchionni L."/>
            <person name="Matsuda H."/>
            <person name="Matsuzawa S."/>
            <person name="Miki H."/>
            <person name="Mignone F."/>
            <person name="Miyake S."/>
            <person name="Morris K."/>
            <person name="Mottagui-Tabar S."/>
            <person name="Mulder N."/>
            <person name="Nakano N."/>
            <person name="Nakauchi H."/>
            <person name="Ng P."/>
            <person name="Nilsson R."/>
            <person name="Nishiguchi S."/>
            <person name="Nishikawa S."/>
            <person name="Nori F."/>
            <person name="Ohara O."/>
            <person name="Okazaki Y."/>
            <person name="Orlando V."/>
            <person name="Pang K.C."/>
            <person name="Pavan W.J."/>
            <person name="Pavesi G."/>
            <person name="Pesole G."/>
            <person name="Petrovsky N."/>
            <person name="Piazza S."/>
            <person name="Reed J."/>
            <person name="Reid J.F."/>
            <person name="Ring B.Z."/>
            <person name="Ringwald M."/>
            <person name="Rost B."/>
            <person name="Ruan Y."/>
            <person name="Salzberg S.L."/>
            <person name="Sandelin A."/>
            <person name="Schneider C."/>
            <person name="Schoenbach C."/>
            <person name="Sekiguchi K."/>
            <person name="Semple C.A."/>
            <person name="Seno S."/>
            <person name="Sessa L."/>
            <person name="Sheng Y."/>
            <person name="Shibata Y."/>
            <person name="Shimada H."/>
            <person name="Shimada K."/>
            <person name="Silva D."/>
            <person name="Sinclair B."/>
            <person name="Sperling S."/>
            <person name="Stupka E."/>
            <person name="Sugiura K."/>
            <person name="Sultana R."/>
            <person name="Takenaka Y."/>
            <person name="Taki K."/>
            <person name="Tammoja K."/>
            <person name="Tan S.L."/>
            <person name="Tang S."/>
            <person name="Taylor M.S."/>
            <person name="Tegner J."/>
            <person name="Teichmann S.A."/>
            <person name="Ueda H.R."/>
            <person name="van Nimwegen E."/>
            <person name="Verardo R."/>
            <person name="Wei C.L."/>
            <person name="Yagi K."/>
            <person name="Yamanishi H."/>
            <person name="Zabarovsky E."/>
            <person name="Zhu S."/>
            <person name="Zimmer A."/>
            <person name="Hide W."/>
            <person name="Bult C."/>
            <person name="Grimmond S.M."/>
            <person name="Teasdale R.D."/>
            <person name="Liu E.T."/>
            <person name="Brusic V."/>
            <person name="Quackenbush J."/>
            <person name="Wahlestedt C."/>
            <person name="Mattick J.S."/>
            <person name="Hume D.A."/>
            <person name="Kai C."/>
            <person name="Sasaki D."/>
            <person name="Tomaru Y."/>
            <person name="Fukuda S."/>
            <person name="Kanamori-Katayama M."/>
            <person name="Suzuki M."/>
            <person name="Aoki J."/>
            <person name="Arakawa T."/>
            <person name="Iida J."/>
            <person name="Imamura K."/>
            <person name="Itoh M."/>
            <person name="Kato T."/>
            <person name="Kawaji H."/>
            <person name="Kawagashira N."/>
            <person name="Kawashima T."/>
            <person name="Kojima M."/>
            <person name="Kondo S."/>
            <person name="Konno H."/>
            <person name="Nakano K."/>
            <person name="Ninomiya N."/>
            <person name="Nishio T."/>
            <person name="Okada M."/>
            <person name="Plessy C."/>
            <person name="Shibata K."/>
            <person name="Shiraki T."/>
            <person name="Suzuki S."/>
            <person name="Tagami M."/>
            <person name="Waki K."/>
            <person name="Watahiki A."/>
            <person name="Okamura-Oho Y."/>
            <person name="Suzuki H."/>
            <person name="Kawai J."/>
            <person name="Hayashizaki Y."/>
        </authorList>
    </citation>
    <scope>NUCLEOTIDE SEQUENCE [LARGE SCALE MRNA] (ISOFORM 1)</scope>
    <source>
        <strain evidence="12">C57BL/6J</strain>
        <tissue evidence="12">Embryonic liver</tissue>
        <tissue evidence="11">Testis</tissue>
    </source>
</reference>
<reference evidence="9 10" key="2">
    <citation type="journal article" date="2004" name="Genome Res.">
        <title>The status, quality, and expansion of the NIH full-length cDNA project: the Mammalian Gene Collection (MGC).</title>
        <authorList>
            <consortium name="The MGC Project Team"/>
        </authorList>
    </citation>
    <scope>NUCLEOTIDE SEQUENCE [LARGE SCALE MRNA] (ISOFORMS 1 AND 2)</scope>
    <source>
        <tissue>Brain</tissue>
        <tissue evidence="10">Pancreas</tissue>
    </source>
</reference>
<reference key="3">
    <citation type="journal article" date="2007" name="Proc. Natl. Acad. Sci. U.S.A.">
        <title>Large-scale phosphorylation analysis of mouse liver.</title>
        <authorList>
            <person name="Villen J."/>
            <person name="Beausoleil S.A."/>
            <person name="Gerber S.A."/>
            <person name="Gygi S.P."/>
        </authorList>
    </citation>
    <scope>PHOSPHORYLATION [LARGE SCALE ANALYSIS] AT SER-783</scope>
    <scope>IDENTIFICATION BY MASS SPECTROMETRY [LARGE SCALE ANALYSIS]</scope>
    <source>
        <tissue>Liver</tissue>
    </source>
</reference>
<reference key="4">
    <citation type="journal article" date="2009" name="Immunity">
        <title>The phagosomal proteome in interferon-gamma-activated macrophages.</title>
        <authorList>
            <person name="Trost M."/>
            <person name="English L."/>
            <person name="Lemieux S."/>
            <person name="Courcelles M."/>
            <person name="Desjardins M."/>
            <person name="Thibault P."/>
        </authorList>
    </citation>
    <scope>PHOSPHORYLATION [LARGE SCALE ANALYSIS] AT SER-1063; SER-1064 AND SER-1065</scope>
    <scope>IDENTIFICATION BY MASS SPECTROMETRY [LARGE SCALE ANALYSIS]</scope>
</reference>
<reference key="5">
    <citation type="journal article" date="2010" name="Cell">
        <title>A tissue-specific atlas of mouse protein phosphorylation and expression.</title>
        <authorList>
            <person name="Huttlin E.L."/>
            <person name="Jedrychowski M.P."/>
            <person name="Elias J.E."/>
            <person name="Goswami T."/>
            <person name="Rad R."/>
            <person name="Beausoleil S.A."/>
            <person name="Villen J."/>
            <person name="Haas W."/>
            <person name="Sowa M.E."/>
            <person name="Gygi S.P."/>
        </authorList>
    </citation>
    <scope>PHOSPHORYLATION [LARGE SCALE ANALYSIS] AT SER-300; SER-306; SER-364; SER-365; THR-367; THR-777; SER-783; SER-787; SER-819; SER-820; SER-825; SER-1063; SER-1064; SER-1065 AND SER-1080</scope>
    <scope>IDENTIFICATION BY MASS SPECTROMETRY [LARGE SCALE ANALYSIS]</scope>
    <source>
        <tissue>Brain</tissue>
        <tissue>Brown adipose tissue</tissue>
        <tissue>Kidney</tissue>
        <tissue>Liver</tissue>
        <tissue>Lung</tissue>
        <tissue>Pancreas</tissue>
        <tissue>Spleen</tissue>
        <tissue>Testis</tissue>
    </source>
</reference>
<accession>Q3UHX0</accession>
<accession>Q059P5</accession>
<accession>Q504M4</accession>
<accession>Q8CDJ7</accession>
<accession>Q9CUR0</accession>
<evidence type="ECO:0000250" key="1"/>
<evidence type="ECO:0000250" key="2">
    <source>
        <dbReference type="UniProtKB" id="Q76FK4"/>
    </source>
</evidence>
<evidence type="ECO:0000255" key="3"/>
<evidence type="ECO:0000255" key="4">
    <source>
        <dbReference type="PROSITE-ProRule" id="PRU00176"/>
    </source>
</evidence>
<evidence type="ECO:0000256" key="5">
    <source>
        <dbReference type="SAM" id="MobiDB-lite"/>
    </source>
</evidence>
<evidence type="ECO:0000269" key="6">
    <source>
    </source>
</evidence>
<evidence type="ECO:0000269" key="7">
    <source>
    </source>
</evidence>
<evidence type="ECO:0000303" key="8">
    <source>
    </source>
</evidence>
<evidence type="ECO:0000305" key="9"/>
<evidence type="ECO:0000312" key="10">
    <source>
        <dbReference type="EMBL" id="AAH94941.1"/>
    </source>
</evidence>
<evidence type="ECO:0000312" key="11">
    <source>
        <dbReference type="EMBL" id="BAC26701.1"/>
    </source>
</evidence>
<evidence type="ECO:0000312" key="12">
    <source>
        <dbReference type="EMBL" id="BAE27736.1"/>
    </source>
</evidence>
<evidence type="ECO:0000312" key="13">
    <source>
        <dbReference type="MGI" id="MGI:1918180"/>
    </source>
</evidence>
<evidence type="ECO:0007744" key="14">
    <source>
    </source>
</evidence>
<evidence type="ECO:0007744" key="15">
    <source>
    </source>
</evidence>
<evidence type="ECO:0007744" key="16">
    <source>
    </source>
</evidence>
<dbReference type="EMBL" id="AK029961">
    <property type="protein sequence ID" value="BAC26701.1"/>
    <property type="status" value="ALT_INIT"/>
    <property type="molecule type" value="mRNA"/>
</dbReference>
<dbReference type="EMBL" id="AK147172">
    <property type="protein sequence ID" value="BAE27736.1"/>
    <property type="molecule type" value="mRNA"/>
</dbReference>
<dbReference type="EMBL" id="AK014994">
    <property type="protein sequence ID" value="BAB29660.1"/>
    <property type="status" value="ALT_INIT"/>
    <property type="molecule type" value="mRNA"/>
</dbReference>
<dbReference type="EMBL" id="BC094941">
    <property type="protein sequence ID" value="AAH94941.1"/>
    <property type="molecule type" value="mRNA"/>
</dbReference>
<dbReference type="EMBL" id="BC125575">
    <property type="protein sequence ID" value="AAI25576.1"/>
    <property type="molecule type" value="mRNA"/>
</dbReference>
<dbReference type="EMBL" id="BC125579">
    <property type="protein sequence ID" value="AAI25580.1"/>
    <property type="molecule type" value="mRNA"/>
</dbReference>
<dbReference type="RefSeq" id="NP_001258326.1">
    <property type="nucleotide sequence ID" value="NM_001271397.1"/>
</dbReference>
<dbReference type="RefSeq" id="XP_006517019.2">
    <molecule id="Q3UHX0-1"/>
    <property type="nucleotide sequence ID" value="XM_006516956.3"/>
</dbReference>
<dbReference type="SMR" id="Q3UHX0"/>
<dbReference type="BioGRID" id="214353">
    <property type="interactions" value="3"/>
</dbReference>
<dbReference type="FunCoup" id="Q3UHX0">
    <property type="interactions" value="3148"/>
</dbReference>
<dbReference type="STRING" id="10090.ENSMUSP00000152536"/>
<dbReference type="GlyGen" id="Q3UHX0">
    <property type="glycosylation" value="1 site, 1 O-linked glycan (1 site)"/>
</dbReference>
<dbReference type="iPTMnet" id="Q3UHX0"/>
<dbReference type="PhosphoSitePlus" id="Q3UHX0"/>
<dbReference type="jPOST" id="Q3UHX0"/>
<dbReference type="PaxDb" id="10090-ENSMUSP00000021824"/>
<dbReference type="PeptideAtlas" id="Q3UHX0"/>
<dbReference type="ProteomicsDB" id="252986">
    <molecule id="Q3UHX0-1"/>
</dbReference>
<dbReference type="ProteomicsDB" id="252987">
    <molecule id="Q3UHX0-2"/>
</dbReference>
<dbReference type="Pumba" id="Q3UHX0"/>
<dbReference type="Antibodypedia" id="43737">
    <property type="antibodies" value="118 antibodies from 22 providers"/>
</dbReference>
<dbReference type="Ensembl" id="ENSMUST00000221142.2">
    <molecule id="Q3UHX0-1"/>
    <property type="protein sequence ID" value="ENSMUSP00000152552.2"/>
    <property type="gene ID" value="ENSMUSG00000021392.9"/>
</dbReference>
<dbReference type="Ensembl" id="ENSMUST00000223467.2">
    <molecule id="Q3UHX0-1"/>
    <property type="protein sequence ID" value="ENSMUSP00000152878.2"/>
    <property type="gene ID" value="ENSMUSG00000021392.9"/>
</dbReference>
<dbReference type="GeneID" id="70930"/>
<dbReference type="KEGG" id="mmu:70930"/>
<dbReference type="UCSC" id="uc033glk.1">
    <molecule id="Q3UHX0-1"/>
    <property type="organism name" value="mouse"/>
</dbReference>
<dbReference type="AGR" id="MGI:1918180"/>
<dbReference type="CTD" id="55035"/>
<dbReference type="MGI" id="MGI:1918180">
    <property type="gene designation" value="Nol8"/>
</dbReference>
<dbReference type="VEuPathDB" id="HostDB:ENSMUSG00000021392"/>
<dbReference type="eggNOG" id="KOG4365">
    <property type="taxonomic scope" value="Eukaryota"/>
</dbReference>
<dbReference type="GeneTree" id="ENSGT00390000004860"/>
<dbReference type="InParanoid" id="Q3UHX0"/>
<dbReference type="OMA" id="RNIMKYD"/>
<dbReference type="OrthoDB" id="21643at2759"/>
<dbReference type="PhylomeDB" id="Q3UHX0"/>
<dbReference type="BioGRID-ORCS" id="70930">
    <property type="hits" value="9 hits in 77 CRISPR screens"/>
</dbReference>
<dbReference type="ChiTaRS" id="Nol8">
    <property type="organism name" value="mouse"/>
</dbReference>
<dbReference type="PRO" id="PR:Q3UHX0"/>
<dbReference type="Proteomes" id="UP000000589">
    <property type="component" value="Chromosome 13"/>
</dbReference>
<dbReference type="RNAct" id="Q3UHX0">
    <property type="molecule type" value="protein"/>
</dbReference>
<dbReference type="Bgee" id="ENSMUSG00000021392">
    <property type="expression patterns" value="Expressed in animal zygote and 240 other cell types or tissues"/>
</dbReference>
<dbReference type="ExpressionAtlas" id="Q3UHX0">
    <property type="expression patterns" value="baseline and differential"/>
</dbReference>
<dbReference type="GO" id="GO:0005730">
    <property type="term" value="C:nucleolus"/>
    <property type="evidence" value="ECO:0000250"/>
    <property type="project" value="UniProtKB"/>
</dbReference>
<dbReference type="GO" id="GO:0003723">
    <property type="term" value="F:RNA binding"/>
    <property type="evidence" value="ECO:0007669"/>
    <property type="project" value="UniProtKB-KW"/>
</dbReference>
<dbReference type="GO" id="GO:1990830">
    <property type="term" value="P:cellular response to leukemia inhibitory factor"/>
    <property type="evidence" value="ECO:0000270"/>
    <property type="project" value="MGI"/>
</dbReference>
<dbReference type="GO" id="GO:0006364">
    <property type="term" value="P:rRNA processing"/>
    <property type="evidence" value="ECO:0000250"/>
    <property type="project" value="UniProtKB"/>
</dbReference>
<dbReference type="CDD" id="cd12226">
    <property type="entry name" value="RRM_NOL8"/>
    <property type="match status" value="1"/>
</dbReference>
<dbReference type="FunFam" id="3.30.70.330:FF:000346">
    <property type="entry name" value="Nucleolar protein 8"/>
    <property type="match status" value="1"/>
</dbReference>
<dbReference type="Gene3D" id="3.30.70.330">
    <property type="match status" value="1"/>
</dbReference>
<dbReference type="InterPro" id="IPR034138">
    <property type="entry name" value="NOP8_RRM"/>
</dbReference>
<dbReference type="InterPro" id="IPR012677">
    <property type="entry name" value="Nucleotide-bd_a/b_plait_sf"/>
</dbReference>
<dbReference type="InterPro" id="IPR035979">
    <property type="entry name" value="RBD_domain_sf"/>
</dbReference>
<dbReference type="InterPro" id="IPR000504">
    <property type="entry name" value="RRM_dom"/>
</dbReference>
<dbReference type="PANTHER" id="PTHR48029">
    <property type="entry name" value="NUCLEOLAR PROTEIN 8"/>
    <property type="match status" value="1"/>
</dbReference>
<dbReference type="PANTHER" id="PTHR48029:SF1">
    <property type="entry name" value="NUCLEOLAR PROTEIN 8"/>
    <property type="match status" value="1"/>
</dbReference>
<dbReference type="Pfam" id="PF00076">
    <property type="entry name" value="RRM_1"/>
    <property type="match status" value="1"/>
</dbReference>
<dbReference type="SMART" id="SM00360">
    <property type="entry name" value="RRM"/>
    <property type="match status" value="1"/>
</dbReference>
<dbReference type="SUPFAM" id="SSF54928">
    <property type="entry name" value="RNA-binding domain, RBD"/>
    <property type="match status" value="1"/>
</dbReference>
<dbReference type="PROSITE" id="PS50102">
    <property type="entry name" value="RRM"/>
    <property type="match status" value="1"/>
</dbReference>
<sequence length="1147" mass="128635">MQGNREMKRLFVGGLGQGISETDLQNQFGRFGEVSDVEIITRKDDQGNSQKVFAYVNIQITEADLKKCMSILNKTKWKGGTLQIQLAKESFLHRLAQEREDAKAKKEKSTTGNPTLLEKMGAVDFHMKAVPGTEVPGHKNWVVSKFGRVLPVLHLKNQQKHKIMKYDPSKYCHNIKKIPENLTETTPIAELTWELEGGNDPMSKKRRGEFSDFHIPPQKVKKVQKSNDPMESKVSNIGLRTNQVMEKNKSTHPVTAHGTAPSTVNPSKQLLVSSSGTQKPKHVVFHNSDFEIIWNKSSMSDDDVDSEDELKMMIAKEENREKPGHSSVNESEHDTFEVVRDDFKSNIHKLSSSVSLGNNHEYDSSDTDEIIAMKTKNAKVKNSAESSQPERTVSKKSSFQKIEPSNDCIKVQGINSNKESALCHGVKFVNPKFPPDSSGSDSEESEEDEEYKVLMENCPRVSLTLADLEQLAGSHRKFPGKDSETNGPQNDSHCKFDTTSKNPKTSGDLYNGRQQCILPEEIVASLLEDENTYSKQKSEEDILKPKFQAFKGIGCLYAKESVDKTLKENIAFNTGGGHHSSLKHEDHNRSLMENGSKCVNGSSSKLTSCQPAKKVNDPNHIQPPKRQCTFENQNHKVMSSTSCDKGSTNPLPGPLPLKAKTSLHLSANSHKVDSDGDACHWPESRKALEKERTNLSNLESLEKSSKVSPREDPQKSPAGFSLSDSNASCINAKDKQAEDNQKRLAALAAWQKAREVQKKLVHSALANLDGHPEDKKTHIVFASDNESETEETSTQEQSCPEKELMKESVSKSPGKLFDSSDDEDSDSKEDSTRFSIKPQFEGRAGQKLMDLQSQFGSDERFRMDSRFLESDSEDEKKELNEDKVNEDELAAEKKKTLNVVQSVLNINVNNPTNKGSVAAKKFKDIVHYDPTKHDHAIYERKQEDKEKESKATRKKKKEEAEKLPEVSQDMYYNIAADLKEIFQSMSNTDEKEEDVPRTEAGAREGTGKIRNAETLACEPEQTTGFTFSFFDSATKDEKDATYRIELVKHGKIVCPNDPRFQDSSSEEEDIAEEADHSKPSPGEAVPENEAIRFFFFSENDDRLRGSNLFWSGMGGSISRNSWEARTSSLLLECRKKHKEAKRKVKAN</sequence>
<name>NOL8_MOUSE</name>
<gene>
    <name evidence="13" type="primary">Nol8</name>
</gene>
<feature type="chain" id="PRO_0000239444" description="Nucleolar protein 8">
    <location>
        <begin position="1"/>
        <end position="1147"/>
    </location>
</feature>
<feature type="domain" description="RRM" evidence="4">
    <location>
        <begin position="8"/>
        <end position="89"/>
    </location>
</feature>
<feature type="region of interest" description="Disordered" evidence="5">
    <location>
        <begin position="379"/>
        <end position="401"/>
    </location>
</feature>
<feature type="region of interest" description="Disordered" evidence="5">
    <location>
        <begin position="427"/>
        <end position="452"/>
    </location>
</feature>
<feature type="region of interest" description="Disordered" evidence="5">
    <location>
        <begin position="472"/>
        <end position="511"/>
    </location>
</feature>
<feature type="region of interest" description="Disordered" evidence="5">
    <location>
        <begin position="592"/>
        <end position="659"/>
    </location>
</feature>
<feature type="region of interest" description="Disordered" evidence="5">
    <location>
        <begin position="686"/>
        <end position="741"/>
    </location>
</feature>
<feature type="region of interest" description="Disordered" evidence="5">
    <location>
        <begin position="766"/>
        <end position="888"/>
    </location>
</feature>
<feature type="region of interest" description="Disordered" evidence="5">
    <location>
        <begin position="932"/>
        <end position="963"/>
    </location>
</feature>
<feature type="region of interest" description="Disordered" evidence="5">
    <location>
        <begin position="986"/>
        <end position="1017"/>
    </location>
</feature>
<feature type="region of interest" description="Disordered" evidence="5">
    <location>
        <begin position="1055"/>
        <end position="1086"/>
    </location>
</feature>
<feature type="coiled-coil region" evidence="3">
    <location>
        <begin position="868"/>
        <end position="898"/>
    </location>
</feature>
<feature type="coiled-coil region" evidence="3">
    <location>
        <begin position="937"/>
        <end position="963"/>
    </location>
</feature>
<feature type="compositionally biased region" description="Polar residues" evidence="5">
    <location>
        <begin position="383"/>
        <end position="400"/>
    </location>
</feature>
<feature type="compositionally biased region" description="Acidic residues" evidence="5">
    <location>
        <begin position="441"/>
        <end position="450"/>
    </location>
</feature>
<feature type="compositionally biased region" description="Polar residues" evidence="5">
    <location>
        <begin position="592"/>
        <end position="610"/>
    </location>
</feature>
<feature type="compositionally biased region" description="Polar residues" evidence="5">
    <location>
        <begin position="629"/>
        <end position="650"/>
    </location>
</feature>
<feature type="compositionally biased region" description="Basic and acidic residues" evidence="5">
    <location>
        <begin position="700"/>
        <end position="714"/>
    </location>
</feature>
<feature type="compositionally biased region" description="Basic and acidic residues" evidence="5">
    <location>
        <begin position="732"/>
        <end position="741"/>
    </location>
</feature>
<feature type="compositionally biased region" description="Basic and acidic residues" evidence="5">
    <location>
        <begin position="799"/>
        <end position="809"/>
    </location>
</feature>
<feature type="compositionally biased region" description="Basic and acidic residues" evidence="5">
    <location>
        <begin position="857"/>
        <end position="883"/>
    </location>
</feature>
<feature type="compositionally biased region" description="Basic and acidic residues" evidence="5">
    <location>
        <begin position="994"/>
        <end position="1011"/>
    </location>
</feature>
<feature type="modified residue" description="Phosphoserine" evidence="16">
    <location>
        <position position="300"/>
    </location>
</feature>
<feature type="modified residue" description="Phosphoserine" evidence="16">
    <location>
        <position position="306"/>
    </location>
</feature>
<feature type="modified residue" description="Phosphotyrosine" evidence="2">
    <location>
        <position position="362"/>
    </location>
</feature>
<feature type="modified residue" description="Phosphoserine" evidence="16">
    <location>
        <position position="364"/>
    </location>
</feature>
<feature type="modified residue" description="Phosphoserine" evidence="16">
    <location>
        <position position="365"/>
    </location>
</feature>
<feature type="modified residue" description="Phosphothreonine" evidence="16">
    <location>
        <position position="367"/>
    </location>
</feature>
<feature type="modified residue" description="Phosphoserine" evidence="2">
    <location>
        <position position="416"/>
    </location>
</feature>
<feature type="modified residue" description="Phosphoserine" evidence="2">
    <location>
        <position position="704"/>
    </location>
</feature>
<feature type="modified residue" description="Phosphothreonine" evidence="16">
    <location>
        <position position="777"/>
    </location>
</feature>
<feature type="modified residue" description="Phosphoserine" evidence="14 16">
    <location>
        <position position="783"/>
    </location>
</feature>
<feature type="modified residue" description="Phosphoserine" evidence="16">
    <location>
        <position position="787"/>
    </location>
</feature>
<feature type="modified residue" description="Phosphoserine" evidence="16">
    <location>
        <position position="819"/>
    </location>
</feature>
<feature type="modified residue" description="Phosphoserine" evidence="16">
    <location>
        <position position="820"/>
    </location>
</feature>
<feature type="modified residue" description="Phosphoserine" evidence="16">
    <location>
        <position position="825"/>
    </location>
</feature>
<feature type="modified residue" description="Phosphoserine" evidence="2">
    <location>
        <position position="827"/>
    </location>
</feature>
<feature type="modified residue" description="Phosphoserine" evidence="2">
    <location>
        <position position="872"/>
    </location>
</feature>
<feature type="modified residue" description="Phosphoserine" evidence="15 16">
    <location>
        <position position="1063"/>
    </location>
</feature>
<feature type="modified residue" description="Phosphoserine" evidence="15 16">
    <location>
        <position position="1064"/>
    </location>
</feature>
<feature type="modified residue" description="Phosphoserine" evidence="15 16">
    <location>
        <position position="1065"/>
    </location>
</feature>
<feature type="modified residue" description="Phosphoserine" evidence="16">
    <location>
        <position position="1080"/>
    </location>
</feature>
<feature type="cross-link" description="Glycyl lysine isopeptide (Lys-Gly) (interchain with G-Cter in SUMO2)" evidence="2">
    <location>
        <position position="225"/>
    </location>
</feature>
<feature type="cross-link" description="Glycyl lysine isopeptide (Lys-Gly) (interchain with G-Cter in SUMO2)" evidence="2">
    <location>
        <position position="316"/>
    </location>
</feature>
<feature type="cross-link" description="Glycyl lysine isopeptide (Lys-Gly) (interchain with G-Cter in SUMO2)" evidence="2">
    <location>
        <position position="1038"/>
    </location>
</feature>
<feature type="splice variant" id="VSP_052057" description="In isoform 2." evidence="8">
    <location>
        <begin position="1"/>
        <end position="848"/>
    </location>
</feature>
<feature type="sequence conflict" description="In Ref. 1; BAC26701." evidence="9" ref="1">
    <original>S</original>
    <variation>R</variation>
    <location>
        <position position="383"/>
    </location>
</feature>
<feature type="sequence conflict" description="In Ref. 1; BAE27736." evidence="9" ref="1">
    <original>D</original>
    <variation>G</variation>
    <location>
        <position position="482"/>
    </location>
</feature>
<keyword id="KW-0025">Alternative splicing</keyword>
<keyword id="KW-0175">Coiled coil</keyword>
<keyword id="KW-1017">Isopeptide bond</keyword>
<keyword id="KW-0539">Nucleus</keyword>
<keyword id="KW-0597">Phosphoprotein</keyword>
<keyword id="KW-1185">Reference proteome</keyword>
<keyword id="KW-0694">RNA-binding</keyword>
<keyword id="KW-0698">rRNA processing</keyword>
<keyword id="KW-0832">Ubl conjugation</keyword>
<protein>
    <recommendedName>
        <fullName>Nucleolar protein 8</fullName>
    </recommendedName>
</protein>
<organism>
    <name type="scientific">Mus musculus</name>
    <name type="common">Mouse</name>
    <dbReference type="NCBI Taxonomy" id="10090"/>
    <lineage>
        <taxon>Eukaryota</taxon>
        <taxon>Metazoa</taxon>
        <taxon>Chordata</taxon>
        <taxon>Craniata</taxon>
        <taxon>Vertebrata</taxon>
        <taxon>Euteleostomi</taxon>
        <taxon>Mammalia</taxon>
        <taxon>Eutheria</taxon>
        <taxon>Euarchontoglires</taxon>
        <taxon>Glires</taxon>
        <taxon>Rodentia</taxon>
        <taxon>Myomorpha</taxon>
        <taxon>Muroidea</taxon>
        <taxon>Muridae</taxon>
        <taxon>Murinae</taxon>
        <taxon>Mus</taxon>
        <taxon>Mus</taxon>
    </lineage>
</organism>
<proteinExistence type="evidence at protein level"/>
<comment type="function">
    <text evidence="1">Plays an essential role in the survival of diffuse-type gastric cancer cells. Acts as a nucleolar anchoring protein for DDX47. May be involved in regulation of gene expression at the post-transcriptional level or in ribosome biogenesis in cancer cells (By similarity).</text>
</comment>
<comment type="subunit">
    <text evidence="1">Interacts with the GTP form of RRAGA, RRAGC and RRAGD. Interacts with NIP7. Interacts with DDX18; the interaction is RNA-dependent. Interacts with DDX47; the interaction is RNA-dependent (By similarity).</text>
</comment>
<comment type="subcellular location">
    <subcellularLocation>
        <location evidence="1">Nucleus</location>
        <location evidence="1">Nucleolus</location>
    </subcellularLocation>
    <text evidence="1">Localizes in the nucleolar-organizing region during ribosome biogenesis.</text>
</comment>
<comment type="alternative products">
    <event type="alternative splicing"/>
    <isoform>
        <id>Q3UHX0-1</id>
        <name evidence="7">1</name>
        <sequence type="displayed"/>
    </isoform>
    <isoform>
        <id>Q3UHX0-2</id>
        <name evidence="6">2</name>
        <sequence type="described" ref="VSP_052057"/>
    </isoform>
</comment>
<comment type="PTM">
    <text evidence="2">Phosphorylated.</text>
</comment>
<comment type="sequence caution" evidence="9">
    <conflict type="erroneous initiation">
        <sequence resource="EMBL-CDS" id="BAB29660"/>
    </conflict>
</comment>
<comment type="sequence caution" evidence="9">
    <conflict type="erroneous initiation">
        <sequence resource="EMBL-CDS" id="BAC26701"/>
    </conflict>
</comment>